<evidence type="ECO:0000255" key="1">
    <source>
        <dbReference type="HAMAP-Rule" id="MF_01043"/>
    </source>
</evidence>
<sequence length="202" mass="22263">MMIIVMLLLSYLIGAFPSGFVIGKLFFKKDIRQFGSGNTGATNSFRVLGRPAGFLVTFLDIFKGFITVFFPLWLQVHADGPISTFFTNGLIVGLFAILGHVYPVYLKFQGGKAVATSAGVVLGVNPILLLILAIIFFIVLKIFKYVSLASIVAAICCVIGSLIIQDYILLVVSFLVSIILIIRHRSNIARIFRGEEPKIKWM</sequence>
<comment type="function">
    <text evidence="1">Catalyzes the transfer of an acyl group from acyl-phosphate (acyl-PO(4)) to glycerol-3-phosphate (G3P) to form lysophosphatidic acid (LPA). This enzyme utilizes acyl-phosphate as fatty acyl donor, but not acyl-CoA or acyl-ACP.</text>
</comment>
<comment type="catalytic activity">
    <reaction evidence="1">
        <text>an acyl phosphate + sn-glycerol 3-phosphate = a 1-acyl-sn-glycero-3-phosphate + phosphate</text>
        <dbReference type="Rhea" id="RHEA:34075"/>
        <dbReference type="ChEBI" id="CHEBI:43474"/>
        <dbReference type="ChEBI" id="CHEBI:57597"/>
        <dbReference type="ChEBI" id="CHEBI:57970"/>
        <dbReference type="ChEBI" id="CHEBI:59918"/>
        <dbReference type="EC" id="2.3.1.275"/>
    </reaction>
</comment>
<comment type="pathway">
    <text evidence="1">Lipid metabolism; phospholipid metabolism.</text>
</comment>
<comment type="subunit">
    <text evidence="1">Probably interacts with PlsX.</text>
</comment>
<comment type="subcellular location">
    <subcellularLocation>
        <location evidence="1">Cell membrane</location>
        <topology evidence="1">Multi-pass membrane protein</topology>
    </subcellularLocation>
</comment>
<comment type="similarity">
    <text evidence="1">Belongs to the PlsY family.</text>
</comment>
<proteinExistence type="inferred from homology"/>
<accession>Q2FH82</accession>
<dbReference type="EC" id="2.3.1.275" evidence="1"/>
<dbReference type="EMBL" id="CP000255">
    <property type="protein sequence ID" value="ABD22437.1"/>
    <property type="molecule type" value="Genomic_DNA"/>
</dbReference>
<dbReference type="RefSeq" id="WP_000972781.1">
    <property type="nucleotide sequence ID" value="NZ_CP027476.1"/>
</dbReference>
<dbReference type="SMR" id="Q2FH82"/>
<dbReference type="KEGG" id="saa:SAUSA300_1249"/>
<dbReference type="HOGENOM" id="CLU_081254_4_0_9"/>
<dbReference type="OMA" id="WWSHRAN"/>
<dbReference type="UniPathway" id="UPA00085"/>
<dbReference type="Proteomes" id="UP000001939">
    <property type="component" value="Chromosome"/>
</dbReference>
<dbReference type="GO" id="GO:0005886">
    <property type="term" value="C:plasma membrane"/>
    <property type="evidence" value="ECO:0007669"/>
    <property type="project" value="UniProtKB-SubCell"/>
</dbReference>
<dbReference type="GO" id="GO:0043772">
    <property type="term" value="F:acyl-phosphate glycerol-3-phosphate acyltransferase activity"/>
    <property type="evidence" value="ECO:0007669"/>
    <property type="project" value="UniProtKB-UniRule"/>
</dbReference>
<dbReference type="GO" id="GO:0008654">
    <property type="term" value="P:phospholipid biosynthetic process"/>
    <property type="evidence" value="ECO:0007669"/>
    <property type="project" value="UniProtKB-UniRule"/>
</dbReference>
<dbReference type="HAMAP" id="MF_01043">
    <property type="entry name" value="PlsY"/>
    <property type="match status" value="1"/>
</dbReference>
<dbReference type="InterPro" id="IPR003811">
    <property type="entry name" value="G3P_acylTferase_PlsY"/>
</dbReference>
<dbReference type="NCBIfam" id="TIGR00023">
    <property type="entry name" value="glycerol-3-phosphate 1-O-acyltransferase PlsY"/>
    <property type="match status" value="1"/>
</dbReference>
<dbReference type="PANTHER" id="PTHR30309:SF0">
    <property type="entry name" value="GLYCEROL-3-PHOSPHATE ACYLTRANSFERASE-RELATED"/>
    <property type="match status" value="1"/>
</dbReference>
<dbReference type="PANTHER" id="PTHR30309">
    <property type="entry name" value="INNER MEMBRANE PROTEIN YGIH"/>
    <property type="match status" value="1"/>
</dbReference>
<dbReference type="Pfam" id="PF02660">
    <property type="entry name" value="G3P_acyltransf"/>
    <property type="match status" value="1"/>
</dbReference>
<dbReference type="SMART" id="SM01207">
    <property type="entry name" value="G3P_acyltransf"/>
    <property type="match status" value="1"/>
</dbReference>
<keyword id="KW-1003">Cell membrane</keyword>
<keyword id="KW-0444">Lipid biosynthesis</keyword>
<keyword id="KW-0443">Lipid metabolism</keyword>
<keyword id="KW-0472">Membrane</keyword>
<keyword id="KW-0594">Phospholipid biosynthesis</keyword>
<keyword id="KW-1208">Phospholipid metabolism</keyword>
<keyword id="KW-0808">Transferase</keyword>
<keyword id="KW-0812">Transmembrane</keyword>
<keyword id="KW-1133">Transmembrane helix</keyword>
<feature type="chain" id="PRO_0000250334" description="Glycerol-3-phosphate acyltransferase">
    <location>
        <begin position="1"/>
        <end position="202"/>
    </location>
</feature>
<feature type="transmembrane region" description="Helical" evidence="1">
    <location>
        <begin position="2"/>
        <end position="22"/>
    </location>
</feature>
<feature type="transmembrane region" description="Helical" evidence="1">
    <location>
        <begin position="54"/>
        <end position="74"/>
    </location>
</feature>
<feature type="transmembrane region" description="Helical" evidence="1">
    <location>
        <begin position="85"/>
        <end position="105"/>
    </location>
</feature>
<feature type="transmembrane region" description="Helical" evidence="1">
    <location>
        <begin position="120"/>
        <end position="140"/>
    </location>
</feature>
<feature type="transmembrane region" description="Helical" evidence="1">
    <location>
        <begin position="141"/>
        <end position="161"/>
    </location>
</feature>
<feature type="transmembrane region" description="Helical" evidence="1">
    <location>
        <begin position="162"/>
        <end position="182"/>
    </location>
</feature>
<organism>
    <name type="scientific">Staphylococcus aureus (strain USA300)</name>
    <dbReference type="NCBI Taxonomy" id="367830"/>
    <lineage>
        <taxon>Bacteria</taxon>
        <taxon>Bacillati</taxon>
        <taxon>Bacillota</taxon>
        <taxon>Bacilli</taxon>
        <taxon>Bacillales</taxon>
        <taxon>Staphylococcaceae</taxon>
        <taxon>Staphylococcus</taxon>
    </lineage>
</organism>
<protein>
    <recommendedName>
        <fullName evidence="1">Glycerol-3-phosphate acyltransferase</fullName>
    </recommendedName>
    <alternativeName>
        <fullName evidence="1">Acyl-PO4 G3P acyltransferase</fullName>
    </alternativeName>
    <alternativeName>
        <fullName evidence="1">Acyl-phosphate--glycerol-3-phosphate acyltransferase</fullName>
    </alternativeName>
    <alternativeName>
        <fullName evidence="1">G3P acyltransferase</fullName>
        <shortName evidence="1">GPAT</shortName>
        <ecNumber evidence="1">2.3.1.275</ecNumber>
    </alternativeName>
    <alternativeName>
        <fullName evidence="1">Lysophosphatidic acid synthase</fullName>
        <shortName evidence="1">LPA synthase</shortName>
    </alternativeName>
</protein>
<name>PLSY_STAA3</name>
<gene>
    <name evidence="1" type="primary">plsY</name>
    <name type="ordered locus">SAUSA300_1249</name>
</gene>
<reference key="1">
    <citation type="journal article" date="2006" name="Lancet">
        <title>Complete genome sequence of USA300, an epidemic clone of community-acquired meticillin-resistant Staphylococcus aureus.</title>
        <authorList>
            <person name="Diep B.A."/>
            <person name="Gill S.R."/>
            <person name="Chang R.F."/>
            <person name="Phan T.H."/>
            <person name="Chen J.H."/>
            <person name="Davidson M.G."/>
            <person name="Lin F."/>
            <person name="Lin J."/>
            <person name="Carleton H.A."/>
            <person name="Mongodin E.F."/>
            <person name="Sensabaugh G.F."/>
            <person name="Perdreau-Remington F."/>
        </authorList>
    </citation>
    <scope>NUCLEOTIDE SEQUENCE [LARGE SCALE GENOMIC DNA]</scope>
    <source>
        <strain>USA300</strain>
    </source>
</reference>